<accession>C8VQ92</accession>
<protein>
    <recommendedName>
        <fullName evidence="6">Austinoid biosynthesis clusters protein J</fullName>
    </recommendedName>
</protein>
<organism>
    <name type="scientific">Emericella nidulans (strain FGSC A4 / ATCC 38163 / CBS 112.46 / NRRL 194 / M139)</name>
    <name type="common">Aspergillus nidulans</name>
    <dbReference type="NCBI Taxonomy" id="227321"/>
    <lineage>
        <taxon>Eukaryota</taxon>
        <taxon>Fungi</taxon>
        <taxon>Dikarya</taxon>
        <taxon>Ascomycota</taxon>
        <taxon>Pezizomycotina</taxon>
        <taxon>Eurotiomycetes</taxon>
        <taxon>Eurotiomycetidae</taxon>
        <taxon>Eurotiales</taxon>
        <taxon>Aspergillaceae</taxon>
        <taxon>Aspergillus</taxon>
        <taxon>Aspergillus subgen. Nidulantes</taxon>
    </lineage>
</organism>
<dbReference type="EMBL" id="BN001308">
    <property type="protein sequence ID" value="CBF87256.1"/>
    <property type="molecule type" value="Genomic_DNA"/>
</dbReference>
<dbReference type="RefSeq" id="XP_682524.1">
    <property type="nucleotide sequence ID" value="XM_677432.1"/>
</dbReference>
<dbReference type="SMR" id="C8VQ92"/>
<dbReference type="STRING" id="227321.C8VQ92"/>
<dbReference type="EnsemblFungi" id="CBF87256">
    <property type="protein sequence ID" value="CBF87256"/>
    <property type="gene ID" value="ANIA_11214"/>
</dbReference>
<dbReference type="GeneID" id="2867939"/>
<dbReference type="KEGG" id="ani:ANIA_11214"/>
<dbReference type="VEuPathDB" id="FungiDB:AN11214"/>
<dbReference type="eggNOG" id="ENOG502S4TQ">
    <property type="taxonomic scope" value="Eukaryota"/>
</dbReference>
<dbReference type="HOGENOM" id="CLU_108113_3_0_1"/>
<dbReference type="InParanoid" id="C8VQ92"/>
<dbReference type="OMA" id="NEYMIVL"/>
<dbReference type="OrthoDB" id="3758478at2759"/>
<dbReference type="UniPathway" id="UPA00213"/>
<dbReference type="Proteomes" id="UP000000560">
    <property type="component" value="Chromosome VIII"/>
</dbReference>
<dbReference type="GO" id="GO:1900560">
    <property type="term" value="P:austinol biosynthetic process"/>
    <property type="evidence" value="ECO:0000315"/>
    <property type="project" value="AspGD"/>
</dbReference>
<dbReference type="GO" id="GO:1900563">
    <property type="term" value="P:dehydroaustinol biosynthetic process"/>
    <property type="evidence" value="ECO:0000315"/>
    <property type="project" value="AspGD"/>
</dbReference>
<dbReference type="GO" id="GO:0016114">
    <property type="term" value="P:terpenoid biosynthetic process"/>
    <property type="evidence" value="ECO:0007669"/>
    <property type="project" value="UniProtKB-UniPathway"/>
</dbReference>
<dbReference type="FunFam" id="3.10.450.50:FF:000062">
    <property type="entry name" value="Austinol synthesis protein F"/>
    <property type="match status" value="1"/>
</dbReference>
<dbReference type="Gene3D" id="3.10.450.50">
    <property type="match status" value="1"/>
</dbReference>
<dbReference type="InterPro" id="IPR050977">
    <property type="entry name" value="Fungal_Meroterpenoid_Isomerase"/>
</dbReference>
<dbReference type="PANTHER" id="PTHR39598:SF1">
    <property type="entry name" value="AUSTINOID BIOSYNTHESIS CLUSTERS PROTEIN F-RELATED"/>
    <property type="match status" value="1"/>
</dbReference>
<dbReference type="PANTHER" id="PTHR39598">
    <property type="entry name" value="AUSTINOL SYNTHESIS PROTEIN F-RELATED"/>
    <property type="match status" value="1"/>
</dbReference>
<name>AUSJ_EMENI</name>
<keyword id="KW-1185">Reference proteome</keyword>
<comment type="function">
    <text evidence="2 3 4 5">Part of the gene cluster B that mediates the biosynthesis of austinol and dehydroaustinol, two fungal meroterpenoids (PubMed:22329759). The first step of the pathway is the synthesis of 3,5-dimethylorsellinic acid by the polyketide synthase ausA (PubMed:22329759). 3,5-dimethylorsellinic acid is then prenylated by the polyprenyl transferase ausN (PubMed:22329759). Further epoxidation by the FAD-dependent monooxygenase ausM and cyclization by the probable terpene cyclase ausL lead to the formation of protoaustinoid A (PubMed:22329759). Protoaustinoid A is then oxidized to spiro-lactone preaustinoid A3 by the combined action of the FAD-binding monooxygenases ausB and ausC, and the dioxygenase ausE (PubMed:22329759, PubMed:23865690). Acid-catalyzed keto-rearrangement and ring contraction of the tetraketide portion of preaustinoid A3 by ausJ lead to the formation of preaustinoid A4 (PubMed:22329759). The aldo-keto reductase ausK, with the help of ausH, is involved in the next step by transforming preaustinoid A4 into isoaustinone which is in turn hydroxylated by the P450 monooxygenase ausI to form austinolide (PubMed:22329759). Finally, the cytochrome P450 monooxygenase ausG modifies austinolide to austinol (PubMed:22329759). Austinol can be further modified to dehydroaustinol which forms a diffusible complex with diorcinol that initiates conidiation (PubMed:22234162, PubMed:22329759). Due to genetic rearrangements of the clusters and the subsequent loss of some enzymes, the end products of the Emericella nidulans austinoid biosynthesis clusters are austinol and dehydroaustinol, even if additional enzymes, such as the O-acetyltransferase ausQ and the cytochrome P450 monooxygenase ausR are still functional (PubMed:29076725).</text>
</comment>
<comment type="pathway">
    <text evidence="3">Secondary metabolite biosynthesis; terpenoid biosynthesis.</text>
</comment>
<comment type="subunit">
    <text evidence="1">Homodimer.</text>
</comment>
<comment type="disruption phenotype">
    <text evidence="3">Impairs the synthesis of austinol and dehydroaustinol and accumulates the intermediate compound preaustinoid A3 (PubMed:22329759).</text>
</comment>
<comment type="miscellaneous">
    <text evidence="8">In A.calidoustus, the austinoid gene cluster lies on a contiguous DNA region, while clusters from E.nidulans and P.brasilianum are split in their respective genomes. Genetic rearrangements provoked variability among the clusters and E.nidulans produces the least number of austionoid derivatives with the end products austinol and dehydroaustinol, while P.brasilianum can produce until acetoxydehydroaustin, and A.calidoustus produces the highest number of identified derivatives.</text>
</comment>
<comment type="similarity">
    <text evidence="7">Belongs to the trt14 isomerase family.</text>
</comment>
<gene>
    <name evidence="6" type="primary">ausJ</name>
    <name type="ORF">ANIA_11214</name>
</gene>
<reference key="1">
    <citation type="journal article" date="2005" name="Nature">
        <title>Sequencing of Aspergillus nidulans and comparative analysis with A. fumigatus and A. oryzae.</title>
        <authorList>
            <person name="Galagan J.E."/>
            <person name="Calvo S.E."/>
            <person name="Cuomo C."/>
            <person name="Ma L.-J."/>
            <person name="Wortman J.R."/>
            <person name="Batzoglou S."/>
            <person name="Lee S.-I."/>
            <person name="Bastuerkmen M."/>
            <person name="Spevak C.C."/>
            <person name="Clutterbuck J."/>
            <person name="Kapitonov V."/>
            <person name="Jurka J."/>
            <person name="Scazzocchio C."/>
            <person name="Farman M.L."/>
            <person name="Butler J."/>
            <person name="Purcell S."/>
            <person name="Harris S."/>
            <person name="Braus G.H."/>
            <person name="Draht O."/>
            <person name="Busch S."/>
            <person name="D'Enfert C."/>
            <person name="Bouchier C."/>
            <person name="Goldman G.H."/>
            <person name="Bell-Pedersen D."/>
            <person name="Griffiths-Jones S."/>
            <person name="Doonan J.H."/>
            <person name="Yu J."/>
            <person name="Vienken K."/>
            <person name="Pain A."/>
            <person name="Freitag M."/>
            <person name="Selker E.U."/>
            <person name="Archer D.B."/>
            <person name="Penalva M.A."/>
            <person name="Oakley B.R."/>
            <person name="Momany M."/>
            <person name="Tanaka T."/>
            <person name="Kumagai T."/>
            <person name="Asai K."/>
            <person name="Machida M."/>
            <person name="Nierman W.C."/>
            <person name="Denning D.W."/>
            <person name="Caddick M.X."/>
            <person name="Hynes M."/>
            <person name="Paoletti M."/>
            <person name="Fischer R."/>
            <person name="Miller B.L."/>
            <person name="Dyer P.S."/>
            <person name="Sachs M.S."/>
            <person name="Osmani S.A."/>
            <person name="Birren B.W."/>
        </authorList>
    </citation>
    <scope>NUCLEOTIDE SEQUENCE [LARGE SCALE GENOMIC DNA]</scope>
    <source>
        <strain>FGSC A4 / ATCC 38163 / CBS 112.46 / NRRL 194 / M139</strain>
    </source>
</reference>
<reference key="2">
    <citation type="journal article" date="2009" name="Fungal Genet. Biol.">
        <title>The 2008 update of the Aspergillus nidulans genome annotation: a community effort.</title>
        <authorList>
            <person name="Wortman J.R."/>
            <person name="Gilsenan J.M."/>
            <person name="Joardar V."/>
            <person name="Deegan J."/>
            <person name="Clutterbuck J."/>
            <person name="Andersen M.R."/>
            <person name="Archer D."/>
            <person name="Bencina M."/>
            <person name="Braus G."/>
            <person name="Coutinho P."/>
            <person name="von Dohren H."/>
            <person name="Doonan J."/>
            <person name="Driessen A.J."/>
            <person name="Durek P."/>
            <person name="Espeso E."/>
            <person name="Fekete E."/>
            <person name="Flipphi M."/>
            <person name="Estrada C.G."/>
            <person name="Geysens S."/>
            <person name="Goldman G."/>
            <person name="de Groot P.W."/>
            <person name="Hansen K."/>
            <person name="Harris S.D."/>
            <person name="Heinekamp T."/>
            <person name="Helmstaedt K."/>
            <person name="Henrissat B."/>
            <person name="Hofmann G."/>
            <person name="Homan T."/>
            <person name="Horio T."/>
            <person name="Horiuchi H."/>
            <person name="James S."/>
            <person name="Jones M."/>
            <person name="Karaffa L."/>
            <person name="Karanyi Z."/>
            <person name="Kato M."/>
            <person name="Keller N."/>
            <person name="Kelly D.E."/>
            <person name="Kiel J.A."/>
            <person name="Kim J.M."/>
            <person name="van der Klei I.J."/>
            <person name="Klis F.M."/>
            <person name="Kovalchuk A."/>
            <person name="Krasevec N."/>
            <person name="Kubicek C.P."/>
            <person name="Liu B."/>
            <person name="Maccabe A."/>
            <person name="Meyer V."/>
            <person name="Mirabito P."/>
            <person name="Miskei M."/>
            <person name="Mos M."/>
            <person name="Mullins J."/>
            <person name="Nelson D.R."/>
            <person name="Nielsen J."/>
            <person name="Oakley B.R."/>
            <person name="Osmani S.A."/>
            <person name="Pakula T."/>
            <person name="Paszewski A."/>
            <person name="Paulsen I."/>
            <person name="Pilsyk S."/>
            <person name="Pocsi I."/>
            <person name="Punt P.J."/>
            <person name="Ram A.F."/>
            <person name="Ren Q."/>
            <person name="Robellet X."/>
            <person name="Robson G."/>
            <person name="Seiboth B."/>
            <person name="van Solingen P."/>
            <person name="Specht T."/>
            <person name="Sun J."/>
            <person name="Taheri-Talesh N."/>
            <person name="Takeshita N."/>
            <person name="Ussery D."/>
            <person name="vanKuyk P.A."/>
            <person name="Visser H."/>
            <person name="van de Vondervoort P.J."/>
            <person name="de Vries R.P."/>
            <person name="Walton J."/>
            <person name="Xiang X."/>
            <person name="Xiong Y."/>
            <person name="Zeng A.P."/>
            <person name="Brandt B.W."/>
            <person name="Cornell M.J."/>
            <person name="van den Hondel C.A."/>
            <person name="Visser J."/>
            <person name="Oliver S.G."/>
            <person name="Turner G."/>
        </authorList>
    </citation>
    <scope>GENOME REANNOTATION</scope>
    <source>
        <strain>FGSC A4 / ATCC 38163 / CBS 112.46 / NRRL 194 / M139</strain>
    </source>
</reference>
<reference key="3">
    <citation type="journal article" date="2012" name="ACS Chem. Biol.">
        <title>Signaling the induction of sporulation involves the interaction of two secondary metabolites in Aspergillus nidulans.</title>
        <authorList>
            <person name="Rodriguez-Urra A.B."/>
            <person name="Jimenez C."/>
            <person name="Nieto M.I."/>
            <person name="Rodriguez J."/>
            <person name="Hayashi H."/>
            <person name="Ugalde U."/>
        </authorList>
    </citation>
    <scope>FUNCTION</scope>
</reference>
<reference key="4">
    <citation type="journal article" date="2012" name="J. Am. Chem. Soc.">
        <title>Two separate gene clusters encode the biosynthetic pathway for the meroterpenoids austinol and dehydroaustinol in Aspergillus nidulans.</title>
        <authorList>
            <person name="Lo H.C."/>
            <person name="Entwistle R."/>
            <person name="Guo C.J."/>
            <person name="Ahuja M."/>
            <person name="Szewczyk E."/>
            <person name="Hung J.H."/>
            <person name="Chiang Y.M."/>
            <person name="Oakley B.R."/>
            <person name="Wang C.C."/>
        </authorList>
    </citation>
    <scope>FUNCTION</scope>
    <scope>DISRUPTION PHENOTYPE</scope>
</reference>
<reference key="5">
    <citation type="journal article" date="2013" name="J. Am. Chem. Soc.">
        <title>Spiro-ring formation is catalyzed by a multifunctional dioxygenase in austinol biosynthesis.</title>
        <authorList>
            <person name="Matsuda Y."/>
            <person name="Awakawa T."/>
            <person name="Wakimoto T."/>
            <person name="Abe I."/>
        </authorList>
    </citation>
    <scope>FUNCTION</scope>
</reference>
<reference key="6">
    <citation type="journal article" date="2017" name="ACS Chem. Biol.">
        <title>Rewiring of the austinoid biosynthetic pathway in filamentous fungi.</title>
        <authorList>
            <person name="Mattern D.J."/>
            <person name="Valiante V."/>
            <person name="Horn F."/>
            <person name="Petzke L."/>
            <person name="Brakhage A.A."/>
        </authorList>
    </citation>
    <scope>FUNCTION</scope>
</reference>
<proteinExistence type="inferred from homology"/>
<evidence type="ECO:0000250" key="1">
    <source>
        <dbReference type="UniProtKB" id="Q5AR31"/>
    </source>
</evidence>
<evidence type="ECO:0000269" key="2">
    <source>
    </source>
</evidence>
<evidence type="ECO:0000269" key="3">
    <source>
    </source>
</evidence>
<evidence type="ECO:0000269" key="4">
    <source>
    </source>
</evidence>
<evidence type="ECO:0000269" key="5">
    <source>
    </source>
</evidence>
<evidence type="ECO:0000303" key="6">
    <source>
    </source>
</evidence>
<evidence type="ECO:0000305" key="7"/>
<evidence type="ECO:0000305" key="8">
    <source>
    </source>
</evidence>
<feature type="chain" id="PRO_0000436491" description="Austinoid biosynthesis clusters protein J">
    <location>
        <begin position="1"/>
        <end position="162"/>
    </location>
</feature>
<sequence>MNTTRHRLLATASRFVETLESLDVDAMLAIRSSTCLHHMCCPSFRNYSITNDQTREAFPQWKATITKYKFGVLDDSQILVDEQARKVMIHAETAAETTVGDYNNEYVFILRMAEDCNTVDEIWEFYDTIRLQDLRHRLEASHVPIGVDAPAPFTTTASPAAL</sequence>